<organism>
    <name type="scientific">Ranoidea caerulea</name>
    <name type="common">Green tree frog</name>
    <name type="synonym">Litoria caerulea</name>
    <dbReference type="NCBI Taxonomy" id="30344"/>
    <lineage>
        <taxon>Eukaryota</taxon>
        <taxon>Metazoa</taxon>
        <taxon>Chordata</taxon>
        <taxon>Craniata</taxon>
        <taxon>Vertebrata</taxon>
        <taxon>Euteleostomi</taxon>
        <taxon>Amphibia</taxon>
        <taxon>Batrachia</taxon>
        <taxon>Anura</taxon>
        <taxon>Neobatrachia</taxon>
        <taxon>Hyloidea</taxon>
        <taxon>Hylidae</taxon>
        <taxon>Pelodryadinae</taxon>
        <taxon>Ranoidea</taxon>
    </lineage>
</organism>
<proteinExistence type="evidence at protein level"/>
<dbReference type="GO" id="GO:0005576">
    <property type="term" value="C:extracellular region"/>
    <property type="evidence" value="ECO:0007669"/>
    <property type="project" value="UniProtKB-SubCell"/>
</dbReference>
<dbReference type="GO" id="GO:0005186">
    <property type="term" value="F:pheromone activity"/>
    <property type="evidence" value="ECO:0007669"/>
    <property type="project" value="UniProtKB-KW"/>
</dbReference>
<dbReference type="GO" id="GO:0006952">
    <property type="term" value="P:defense response"/>
    <property type="evidence" value="ECO:0007669"/>
    <property type="project" value="UniProtKB-KW"/>
</dbReference>
<dbReference type="InterPro" id="IPR032021">
    <property type="entry name" value="Frog_Litoria"/>
</dbReference>
<dbReference type="Pfam" id="PF16049">
    <property type="entry name" value="Antimicrobial24"/>
    <property type="match status" value="1"/>
</dbReference>
<keyword id="KW-0878">Amphibian defense peptide</keyword>
<keyword id="KW-0903">Direct protein sequencing</keyword>
<keyword id="KW-0588">Pheromone</keyword>
<keyword id="KW-0964">Secreted</keyword>
<comment type="function">
    <text evidence="1">Acts as a male sex pheromone that attracts females. Has no antimicrobial activity (By similarity).</text>
</comment>
<comment type="subcellular location">
    <subcellularLocation>
        <location>Secreted</location>
    </subcellularLocation>
</comment>
<comment type="tissue specificity">
    <text>Expressed by the skin parotoid and/or rostral glands.</text>
</comment>
<comment type="mass spectrometry"/>
<comment type="similarity">
    <text evidence="3">Belongs to the frog skin active peptide (FSAP) family. Caerin subfamily.</text>
</comment>
<reference key="1">
    <citation type="journal article" date="1993" name="J. Chem. Res.">
        <title>Peptides from Australian frogs. The structures of the caerins from Litoria caerula.</title>
        <authorList>
            <person name="Stone D.J.M."/>
            <person name="Waugh R.J."/>
            <person name="Bowie J.H."/>
            <person name="Wallace J.C."/>
            <person name="Tyler M.J."/>
        </authorList>
    </citation>
    <scope>PROTEIN SEQUENCE</scope>
    <scope>MASS SPECTROMETRY</scope>
    <source>
        <tissue>Parotoid gland</tissue>
    </source>
</reference>
<evidence type="ECO:0000250" key="1"/>
<evidence type="ECO:0000269" key="2">
    <source ref="1"/>
</evidence>
<evidence type="ECO:0000305" key="3"/>
<accession>P69032</accession>
<accession>P56235</accession>
<accession>P82117</accession>
<protein>
    <recommendedName>
        <fullName>Caerin-2.3</fullName>
    </recommendedName>
</protein>
<sequence>GLVSSIGKALGGLLADVVKSKGQPA</sequence>
<feature type="peptide" id="PRO_0000043743" description="Caerin-2.3">
    <location>
        <begin position="1"/>
        <end position="25"/>
    </location>
</feature>
<name>CR23_RANCA</name>